<protein>
    <recommendedName>
        <fullName evidence="1">Small ribosomal subunit protein bS18</fullName>
    </recommendedName>
    <alternativeName>
        <fullName evidence="3">30S ribosomal protein S18</fullName>
    </alternativeName>
</protein>
<organism>
    <name type="scientific">Deinococcus deserti (strain DSM 17065 / CIP 109153 / LMG 22923 / VCD115)</name>
    <dbReference type="NCBI Taxonomy" id="546414"/>
    <lineage>
        <taxon>Bacteria</taxon>
        <taxon>Thermotogati</taxon>
        <taxon>Deinococcota</taxon>
        <taxon>Deinococci</taxon>
        <taxon>Deinococcales</taxon>
        <taxon>Deinococcaceae</taxon>
        <taxon>Deinococcus</taxon>
    </lineage>
</organism>
<reference key="1">
    <citation type="journal article" date="2009" name="PLoS Genet.">
        <title>Alliance of proteomics and genomics to unravel the specificities of Sahara bacterium Deinococcus deserti.</title>
        <authorList>
            <person name="de Groot A."/>
            <person name="Dulermo R."/>
            <person name="Ortet P."/>
            <person name="Blanchard L."/>
            <person name="Guerin P."/>
            <person name="Fernandez B."/>
            <person name="Vacherie B."/>
            <person name="Dossat C."/>
            <person name="Jolivet E."/>
            <person name="Siguier P."/>
            <person name="Chandler M."/>
            <person name="Barakat M."/>
            <person name="Dedieu A."/>
            <person name="Barbe V."/>
            <person name="Heulin T."/>
            <person name="Sommer S."/>
            <person name="Achouak W."/>
            <person name="Armengaud J."/>
        </authorList>
    </citation>
    <scope>NUCLEOTIDE SEQUENCE [LARGE SCALE GENOMIC DNA]</scope>
    <source>
        <strain>DSM 17065 / CIP 109153 / LMG 22923 / VCD115</strain>
    </source>
</reference>
<comment type="function">
    <text evidence="1">Binds as a heterodimer with protein bS6 to the central domain of the 16S rRNA, where it helps stabilize the platform of the 30S subunit.</text>
</comment>
<comment type="subunit">
    <text evidence="1">Part of the 30S ribosomal subunit. Forms a tight heterodimer with protein bS6.</text>
</comment>
<comment type="similarity">
    <text evidence="1">Belongs to the bacterial ribosomal protein bS18 family.</text>
</comment>
<proteinExistence type="inferred from homology"/>
<evidence type="ECO:0000255" key="1">
    <source>
        <dbReference type="HAMAP-Rule" id="MF_00270"/>
    </source>
</evidence>
<evidence type="ECO:0000256" key="2">
    <source>
        <dbReference type="SAM" id="MobiDB-lite"/>
    </source>
</evidence>
<evidence type="ECO:0000305" key="3"/>
<keyword id="KW-1185">Reference proteome</keyword>
<keyword id="KW-0687">Ribonucleoprotein</keyword>
<keyword id="KW-0689">Ribosomal protein</keyword>
<keyword id="KW-0694">RNA-binding</keyword>
<keyword id="KW-0699">rRNA-binding</keyword>
<sequence>MTQQSNSADRKPRGKGPKRPRKPKVDPFSIGELEITDYKDVKMLRRFVSDTGKILPRRRTGLSAKHQRRIAQTIKVARQLALLPYTEKLVRK</sequence>
<feature type="chain" id="PRO_1000204723" description="Small ribosomal subunit protein bS18">
    <location>
        <begin position="1"/>
        <end position="92"/>
    </location>
</feature>
<feature type="region of interest" description="Disordered" evidence="2">
    <location>
        <begin position="1"/>
        <end position="27"/>
    </location>
</feature>
<feature type="compositionally biased region" description="Basic residues" evidence="2">
    <location>
        <begin position="12"/>
        <end position="22"/>
    </location>
</feature>
<accession>C1CXK0</accession>
<dbReference type="EMBL" id="CP001114">
    <property type="protein sequence ID" value="ACO44806.1"/>
    <property type="molecule type" value="Genomic_DNA"/>
</dbReference>
<dbReference type="RefSeq" id="WP_012691929.1">
    <property type="nucleotide sequence ID" value="NC_012526.1"/>
</dbReference>
<dbReference type="SMR" id="C1CXK0"/>
<dbReference type="STRING" id="546414.Deide_00110"/>
<dbReference type="PaxDb" id="546414-Deide_00110"/>
<dbReference type="KEGG" id="ddr:Deide_00110"/>
<dbReference type="eggNOG" id="COG0238">
    <property type="taxonomic scope" value="Bacteria"/>
</dbReference>
<dbReference type="HOGENOM" id="CLU_148710_0_3_0"/>
<dbReference type="OrthoDB" id="9812008at2"/>
<dbReference type="Proteomes" id="UP000002208">
    <property type="component" value="Chromosome"/>
</dbReference>
<dbReference type="GO" id="GO:0022627">
    <property type="term" value="C:cytosolic small ribosomal subunit"/>
    <property type="evidence" value="ECO:0007669"/>
    <property type="project" value="TreeGrafter"/>
</dbReference>
<dbReference type="GO" id="GO:0070181">
    <property type="term" value="F:small ribosomal subunit rRNA binding"/>
    <property type="evidence" value="ECO:0007669"/>
    <property type="project" value="TreeGrafter"/>
</dbReference>
<dbReference type="GO" id="GO:0003735">
    <property type="term" value="F:structural constituent of ribosome"/>
    <property type="evidence" value="ECO:0007669"/>
    <property type="project" value="InterPro"/>
</dbReference>
<dbReference type="GO" id="GO:0006412">
    <property type="term" value="P:translation"/>
    <property type="evidence" value="ECO:0007669"/>
    <property type="project" value="UniProtKB-UniRule"/>
</dbReference>
<dbReference type="FunFam" id="4.10.640.10:FF:000015">
    <property type="entry name" value="30S ribosomal protein S18"/>
    <property type="match status" value="1"/>
</dbReference>
<dbReference type="Gene3D" id="4.10.640.10">
    <property type="entry name" value="Ribosomal protein S18"/>
    <property type="match status" value="1"/>
</dbReference>
<dbReference type="HAMAP" id="MF_00270">
    <property type="entry name" value="Ribosomal_bS18"/>
    <property type="match status" value="1"/>
</dbReference>
<dbReference type="InterPro" id="IPR001648">
    <property type="entry name" value="Ribosomal_bS18"/>
</dbReference>
<dbReference type="InterPro" id="IPR036870">
    <property type="entry name" value="Ribosomal_bS18_sf"/>
</dbReference>
<dbReference type="NCBIfam" id="TIGR00165">
    <property type="entry name" value="S18"/>
    <property type="match status" value="1"/>
</dbReference>
<dbReference type="PANTHER" id="PTHR13479">
    <property type="entry name" value="30S RIBOSOMAL PROTEIN S18"/>
    <property type="match status" value="1"/>
</dbReference>
<dbReference type="PANTHER" id="PTHR13479:SF40">
    <property type="entry name" value="SMALL RIBOSOMAL SUBUNIT PROTEIN BS18M"/>
    <property type="match status" value="1"/>
</dbReference>
<dbReference type="Pfam" id="PF01084">
    <property type="entry name" value="Ribosomal_S18"/>
    <property type="match status" value="1"/>
</dbReference>
<dbReference type="PRINTS" id="PR00974">
    <property type="entry name" value="RIBOSOMALS18"/>
</dbReference>
<dbReference type="SUPFAM" id="SSF46911">
    <property type="entry name" value="Ribosomal protein S18"/>
    <property type="match status" value="1"/>
</dbReference>
<gene>
    <name evidence="1" type="primary">rpsR</name>
    <name type="ordered locus">Deide_00110</name>
</gene>
<name>RS18_DEIDV</name>